<keyword id="KW-0002">3D-structure</keyword>
<keyword id="KW-0025">Alternative splicing</keyword>
<keyword id="KW-0963">Cytoplasm</keyword>
<keyword id="KW-1185">Reference proteome</keyword>
<keyword id="KW-0677">Repeat</keyword>
<keyword id="KW-0694">RNA-binding</keyword>
<keyword id="KW-0943">RNA-mediated gene silencing</keyword>
<sequence>MDQENFHGSSLPQQLQNLHIQPQQASPNPVQTGFAPRRHYNNLVGLGNGNAVSGSPVKGAPLGQRHVKLKKEKISAQVAQLSQPGQLQLSDVGDPALAGGSGLQGGVGLMGVILPSDEALKFVSETDANGLAMKTPVSILQELLSRRGITPGYELVQIEGAIHEPTFRFRVSFKDKDTPFTAMGAGRSKKEAKHAAARALIDKLIGAQLPESPSSSAGPSVTGLTVAGSGGDGNANATGGGDASDKTVGNPIGWLQEMCMQRRWPPPSYETETEVGLPHERLFTIACSILNYREMGKGKSKKIAKRLAAHRMWMRLQETPIDSGKISDSICGELEGEPRSSENYYGELKDISVPTLTTQHSNKVSQFHKTLKNATGKKLLKLQKTCLKNNKIDYIKLLGEIATENQFEVTYVDIEEKTFSGQFQCLVQLSTLPVGVCHGSGPTAADAQRHAAQNALEYLKIMTKK</sequence>
<name>LOQS_DROME</name>
<dbReference type="EMBL" id="AE014134">
    <property type="protein sequence ID" value="AAF53295.2"/>
    <property type="molecule type" value="Genomic_DNA"/>
</dbReference>
<dbReference type="EMBL" id="AE014134">
    <property type="protein sequence ID" value="AAF53296.1"/>
    <property type="molecule type" value="Genomic_DNA"/>
</dbReference>
<dbReference type="EMBL" id="AE014134">
    <property type="protein sequence ID" value="ABC65897.1"/>
    <property type="molecule type" value="Genomic_DNA"/>
</dbReference>
<dbReference type="EMBL" id="AE014134">
    <property type="protein sequence ID" value="ADV37046.1"/>
    <property type="molecule type" value="Genomic_DNA"/>
</dbReference>
<dbReference type="EMBL" id="DQ118034">
    <property type="protein sequence ID" value="AAZ40191.1"/>
    <property type="molecule type" value="mRNA"/>
</dbReference>
<dbReference type="EMBL" id="DQ118035">
    <property type="protein sequence ID" value="AAZ40192.1"/>
    <property type="molecule type" value="mRNA"/>
</dbReference>
<dbReference type="EMBL" id="AY071070">
    <property type="protein sequence ID" value="AAL48692.1"/>
    <property type="molecule type" value="mRNA"/>
</dbReference>
<dbReference type="EMBL" id="DQ026059">
    <property type="protein sequence ID" value="AAY40789.1"/>
    <property type="molecule type" value="mRNA"/>
</dbReference>
<dbReference type="RefSeq" id="NP_001033903.1">
    <molecule id="Q9VJY9-3"/>
    <property type="nucleotide sequence ID" value="NM_001038814.3"/>
</dbReference>
<dbReference type="RefSeq" id="NP_001188796.1">
    <molecule id="Q9VJY9-4"/>
    <property type="nucleotide sequence ID" value="NM_001201867.2"/>
</dbReference>
<dbReference type="RefSeq" id="NP_609646.1">
    <molecule id="Q9VJY9-1"/>
    <property type="nucleotide sequence ID" value="NM_135802.4"/>
</dbReference>
<dbReference type="RefSeq" id="NP_723813.1">
    <molecule id="Q9VJY9-2"/>
    <property type="nucleotide sequence ID" value="NM_165041.3"/>
</dbReference>
<dbReference type="PDB" id="4X8W">
    <property type="method" value="X-ray"/>
    <property type="resolution" value="2.65 A"/>
    <property type="chains" value="A/B/C/D/E/F/G=392-463"/>
</dbReference>
<dbReference type="PDB" id="5NPA">
    <property type="method" value="NMR"/>
    <property type="chains" value="A=252-318"/>
</dbReference>
<dbReference type="PDB" id="7W0A">
    <property type="method" value="EM"/>
    <property type="resolution" value="3.12 A"/>
    <property type="chains" value="B/F=1-359"/>
</dbReference>
<dbReference type="PDB" id="7W0B">
    <property type="method" value="EM"/>
    <property type="resolution" value="3.33 A"/>
    <property type="chains" value="B=1-359"/>
</dbReference>
<dbReference type="PDB" id="7W0C">
    <property type="method" value="EM"/>
    <property type="resolution" value="3.93 A"/>
    <property type="chains" value="B=1-359"/>
</dbReference>
<dbReference type="PDB" id="7W0D">
    <property type="method" value="EM"/>
    <property type="resolution" value="4.18 A"/>
    <property type="chains" value="B/G=1-359"/>
</dbReference>
<dbReference type="PDB" id="7W0E">
    <property type="method" value="EM"/>
    <property type="resolution" value="4.03 A"/>
    <property type="chains" value="B=1-359"/>
</dbReference>
<dbReference type="PDB" id="7W0F">
    <property type="method" value="EM"/>
    <property type="resolution" value="4.55 A"/>
    <property type="chains" value="B=1-359"/>
</dbReference>
<dbReference type="PDB" id="8DFV">
    <property type="method" value="EM"/>
    <property type="resolution" value="3.06 A"/>
    <property type="chains" value="K=1-465"/>
</dbReference>
<dbReference type="PDB" id="8DG5">
    <property type="method" value="EM"/>
    <property type="resolution" value="3.26 A"/>
    <property type="chains" value="K=1-465"/>
</dbReference>
<dbReference type="PDB" id="8DG7">
    <property type="method" value="EM"/>
    <property type="resolution" value="3.32 A"/>
    <property type="chains" value="K=1-465"/>
</dbReference>
<dbReference type="PDB" id="8DGA">
    <property type="method" value="EM"/>
    <property type="resolution" value="3.73 A"/>
    <property type="chains" value="K=1-465"/>
</dbReference>
<dbReference type="PDB" id="8DGI">
    <property type="method" value="EM"/>
    <property type="resolution" value="3.94 A"/>
    <property type="chains" value="N=1-465"/>
</dbReference>
<dbReference type="PDB" id="8DGJ">
    <property type="method" value="EM"/>
    <property type="resolution" value="4.02 A"/>
    <property type="chains" value="N=1-465"/>
</dbReference>
<dbReference type="PDB" id="8HF0">
    <property type="method" value="EM"/>
    <property type="resolution" value="3.72 A"/>
    <property type="chains" value="B=1-359"/>
</dbReference>
<dbReference type="PDB" id="8HF1">
    <property type="method" value="EM"/>
    <property type="resolution" value="3.70 A"/>
    <property type="chains" value="B=344-359"/>
</dbReference>
<dbReference type="PDBsum" id="4X8W"/>
<dbReference type="PDBsum" id="5NPA"/>
<dbReference type="PDBsum" id="7W0A"/>
<dbReference type="PDBsum" id="7W0B"/>
<dbReference type="PDBsum" id="7W0C"/>
<dbReference type="PDBsum" id="7W0D"/>
<dbReference type="PDBsum" id="7W0E"/>
<dbReference type="PDBsum" id="7W0F"/>
<dbReference type="PDBsum" id="8DFV"/>
<dbReference type="PDBsum" id="8DG5"/>
<dbReference type="PDBsum" id="8DG7"/>
<dbReference type="PDBsum" id="8DGA"/>
<dbReference type="PDBsum" id="8DGI"/>
<dbReference type="PDBsum" id="8DGJ"/>
<dbReference type="PDBsum" id="8HF0"/>
<dbReference type="PDBsum" id="8HF1"/>
<dbReference type="BMRB" id="Q9VJY9"/>
<dbReference type="EMDB" id="EMD-27415"/>
<dbReference type="EMDB" id="EMD-27416"/>
<dbReference type="EMDB" id="EMD-27417"/>
<dbReference type="EMDB" id="EMD-27420"/>
<dbReference type="EMDB" id="EMD-27423"/>
<dbReference type="EMDB" id="EMD-27427"/>
<dbReference type="EMDB" id="EMD-32236"/>
<dbReference type="EMDB" id="EMD-32237"/>
<dbReference type="EMDB" id="EMD-32238"/>
<dbReference type="EMDB" id="EMD-32239"/>
<dbReference type="EMDB" id="EMD-32240"/>
<dbReference type="EMDB" id="EMD-32241"/>
<dbReference type="EMDB" id="EMD-34707"/>
<dbReference type="EMDB" id="EMD-34708"/>
<dbReference type="EMDB" id="EMD-39318"/>
<dbReference type="EMDB" id="EMD-39319"/>
<dbReference type="EMDB" id="EMD-39320"/>
<dbReference type="SMR" id="Q9VJY9"/>
<dbReference type="ComplexPortal" id="CPX-2732">
    <property type="entry name" value="siRNA RISC-loading complex, loqs variant"/>
</dbReference>
<dbReference type="DIP" id="DIP-18138N"/>
<dbReference type="DIP" id="DIP-46082N"/>
<dbReference type="FunCoup" id="Q9VJY9">
    <property type="interactions" value="377"/>
</dbReference>
<dbReference type="IntAct" id="Q9VJY9">
    <property type="interactions" value="25"/>
</dbReference>
<dbReference type="STRING" id="7227.FBpp0080076"/>
<dbReference type="GlyGen" id="Q9VJY9">
    <property type="glycosylation" value="2 sites"/>
</dbReference>
<dbReference type="PaxDb" id="7227-FBpp0080076"/>
<dbReference type="PRIDE" id="M9MRT5"/>
<dbReference type="ABCD" id="Q9VJY9">
    <property type="antibodies" value="2 sequenced antibodies"/>
</dbReference>
<dbReference type="DNASU" id="34751"/>
<dbReference type="EnsemblMetazoa" id="FBtr0080497">
    <molecule id="Q9VJY9-2"/>
    <property type="protein sequence ID" value="FBpp0080075"/>
    <property type="gene ID" value="FBgn0032515"/>
</dbReference>
<dbReference type="EnsemblMetazoa" id="FBtr0080498">
    <molecule id="Q9VJY9-1"/>
    <property type="protein sequence ID" value="FBpp0080076"/>
    <property type="gene ID" value="FBgn0032515"/>
</dbReference>
<dbReference type="EnsemblMetazoa" id="FBtr0100220">
    <molecule id="Q9VJY9-3"/>
    <property type="protein sequence ID" value="FBpp0099590"/>
    <property type="gene ID" value="FBgn0032515"/>
</dbReference>
<dbReference type="EnsemblMetazoa" id="FBtr0303269">
    <molecule id="Q9VJY9-4"/>
    <property type="protein sequence ID" value="FBpp0292361"/>
    <property type="gene ID" value="FBgn0032515"/>
</dbReference>
<dbReference type="GeneID" id="34751"/>
<dbReference type="KEGG" id="dme:Dmel_CG6866"/>
<dbReference type="UCSC" id="CG6866-RB">
    <molecule id="Q9VJY9-1"/>
    <property type="organism name" value="d. melanogaster"/>
</dbReference>
<dbReference type="AGR" id="FB:FBgn0032515"/>
<dbReference type="CTD" id="34751"/>
<dbReference type="FlyBase" id="FBgn0032515">
    <property type="gene designation" value="loqs"/>
</dbReference>
<dbReference type="VEuPathDB" id="VectorBase:FBgn0032515"/>
<dbReference type="eggNOG" id="KOG3732">
    <property type="taxonomic scope" value="Eukaryota"/>
</dbReference>
<dbReference type="GeneTree" id="ENSGT00940000172936"/>
<dbReference type="OMA" id="GYSCTWD"/>
<dbReference type="OrthoDB" id="10056847at2759"/>
<dbReference type="Reactome" id="R-DME-203927">
    <property type="pathway name" value="MicroRNA (miRNA) biogenesis"/>
</dbReference>
<dbReference type="Reactome" id="R-DME-426486">
    <property type="pathway name" value="Small interfering RNA (siRNA) biogenesis"/>
</dbReference>
<dbReference type="Reactome" id="R-DME-9833482">
    <property type="pathway name" value="PKR-mediated signaling"/>
</dbReference>
<dbReference type="BioGRID-ORCS" id="34751">
    <property type="hits" value="0 hits in 3 CRISPR screens"/>
</dbReference>
<dbReference type="EvolutionaryTrace" id="Q9VJY9"/>
<dbReference type="GenomeRNAi" id="34751"/>
<dbReference type="PRO" id="PR:Q9VJY9"/>
<dbReference type="Proteomes" id="UP000000803">
    <property type="component" value="Chromosome 2L"/>
</dbReference>
<dbReference type="Bgee" id="FBgn0032515">
    <property type="expression patterns" value="Expressed in mid-late elongation-stage spermatid (Drosophila) in testis and 171 other cell types or tissues"/>
</dbReference>
<dbReference type="ExpressionAtlas" id="Q9VJY9">
    <property type="expression patterns" value="baseline and differential"/>
</dbReference>
<dbReference type="GO" id="GO:0005737">
    <property type="term" value="C:cytoplasm"/>
    <property type="evidence" value="ECO:0000318"/>
    <property type="project" value="GO_Central"/>
</dbReference>
<dbReference type="GO" id="GO:0005829">
    <property type="term" value="C:cytosol"/>
    <property type="evidence" value="ECO:0000314"/>
    <property type="project" value="FlyBase"/>
</dbReference>
<dbReference type="GO" id="GO:0005634">
    <property type="term" value="C:nucleus"/>
    <property type="evidence" value="ECO:0000318"/>
    <property type="project" value="GO_Central"/>
</dbReference>
<dbReference type="GO" id="GO:0016442">
    <property type="term" value="C:RISC complex"/>
    <property type="evidence" value="ECO:0000318"/>
    <property type="project" value="GO_Central"/>
</dbReference>
<dbReference type="GO" id="GO:0070578">
    <property type="term" value="C:RISC-loading complex"/>
    <property type="evidence" value="ECO:0000353"/>
    <property type="project" value="FlyBase"/>
</dbReference>
<dbReference type="GO" id="GO:0003725">
    <property type="term" value="F:double-stranded RNA binding"/>
    <property type="evidence" value="ECO:0000250"/>
    <property type="project" value="FlyBase"/>
</dbReference>
<dbReference type="GO" id="GO:1905172">
    <property type="term" value="F:RISC complex binding"/>
    <property type="evidence" value="ECO:0000353"/>
    <property type="project" value="FlyBase"/>
</dbReference>
<dbReference type="GO" id="GO:0035197">
    <property type="term" value="F:siRNA binding"/>
    <property type="evidence" value="ECO:0000314"/>
    <property type="project" value="FlyBase"/>
</dbReference>
<dbReference type="GO" id="GO:0007417">
    <property type="term" value="P:central nervous system development"/>
    <property type="evidence" value="ECO:0000315"/>
    <property type="project" value="FlyBase"/>
</dbReference>
<dbReference type="GO" id="GO:0009047">
    <property type="term" value="P:dosage compensation by hyperactivation of X chromosome"/>
    <property type="evidence" value="ECO:0000316"/>
    <property type="project" value="FlyBase"/>
</dbReference>
<dbReference type="GO" id="GO:0048132">
    <property type="term" value="P:female germ-line stem cell asymmetric division"/>
    <property type="evidence" value="ECO:0000315"/>
    <property type="project" value="FlyBase"/>
</dbReference>
<dbReference type="GO" id="GO:0030718">
    <property type="term" value="P:germ-line stem cell population maintenance"/>
    <property type="evidence" value="ECO:0000315"/>
    <property type="project" value="FlyBase"/>
</dbReference>
<dbReference type="GO" id="GO:0010586">
    <property type="term" value="P:miRNA metabolic process"/>
    <property type="evidence" value="ECO:0000314"/>
    <property type="project" value="FlyBase"/>
</dbReference>
<dbReference type="GO" id="GO:0031054">
    <property type="term" value="P:pre-miRNA processing"/>
    <property type="evidence" value="ECO:0000314"/>
    <property type="project" value="FlyBase"/>
</dbReference>
<dbReference type="GO" id="GO:0070920">
    <property type="term" value="P:regulation of regulatory ncRNA processing"/>
    <property type="evidence" value="ECO:0000314"/>
    <property type="project" value="FlyBase"/>
</dbReference>
<dbReference type="GO" id="GO:0070922">
    <property type="term" value="P:RISC complex assembly"/>
    <property type="evidence" value="ECO:0000315"/>
    <property type="project" value="FlyBase"/>
</dbReference>
<dbReference type="GO" id="GO:0030422">
    <property type="term" value="P:siRNA processing"/>
    <property type="evidence" value="ECO:0000314"/>
    <property type="project" value="FlyBase"/>
</dbReference>
<dbReference type="CDD" id="cd19862">
    <property type="entry name" value="DSRM_PRKRA-like_rpt1"/>
    <property type="match status" value="1"/>
</dbReference>
<dbReference type="CDD" id="cd19863">
    <property type="entry name" value="DSRM_PRKRA-like_rpt2"/>
    <property type="match status" value="1"/>
</dbReference>
<dbReference type="CDD" id="cd19864">
    <property type="entry name" value="DSRM_PRKRA-like_rpt3"/>
    <property type="match status" value="1"/>
</dbReference>
<dbReference type="FunFam" id="3.30.160.20:FF:000007">
    <property type="entry name" value="Double-stranded RNA-binding protein Staufen homolog 1"/>
    <property type="match status" value="1"/>
</dbReference>
<dbReference type="FunFam" id="3.30.160.20:FF:000120">
    <property type="entry name" value="RISC-loading complex subunit TARBP2"/>
    <property type="match status" value="1"/>
</dbReference>
<dbReference type="Gene3D" id="3.30.160.20">
    <property type="match status" value="3"/>
</dbReference>
<dbReference type="InterPro" id="IPR014720">
    <property type="entry name" value="dsRBD_dom"/>
</dbReference>
<dbReference type="InterPro" id="IPR051247">
    <property type="entry name" value="RLC_Component"/>
</dbReference>
<dbReference type="PANTHER" id="PTHR46205">
    <property type="entry name" value="LOQUACIOUS, ISOFORM B"/>
    <property type="match status" value="1"/>
</dbReference>
<dbReference type="PANTHER" id="PTHR46205:SF3">
    <property type="entry name" value="LOQUACIOUS, ISOFORM B"/>
    <property type="match status" value="1"/>
</dbReference>
<dbReference type="Pfam" id="PF00035">
    <property type="entry name" value="dsrm"/>
    <property type="match status" value="2"/>
</dbReference>
<dbReference type="SMART" id="SM00358">
    <property type="entry name" value="DSRM"/>
    <property type="match status" value="3"/>
</dbReference>
<dbReference type="SUPFAM" id="SSF54768">
    <property type="entry name" value="dsRNA-binding domain-like"/>
    <property type="match status" value="3"/>
</dbReference>
<dbReference type="PROSITE" id="PS50137">
    <property type="entry name" value="DS_RBD"/>
    <property type="match status" value="3"/>
</dbReference>
<organism evidence="34">
    <name type="scientific">Drosophila melanogaster</name>
    <name type="common">Fruit fly</name>
    <dbReference type="NCBI Taxonomy" id="7227"/>
    <lineage>
        <taxon>Eukaryota</taxon>
        <taxon>Metazoa</taxon>
        <taxon>Ecdysozoa</taxon>
        <taxon>Arthropoda</taxon>
        <taxon>Hexapoda</taxon>
        <taxon>Insecta</taxon>
        <taxon>Pterygota</taxon>
        <taxon>Neoptera</taxon>
        <taxon>Endopterygota</taxon>
        <taxon>Diptera</taxon>
        <taxon>Brachycera</taxon>
        <taxon>Muscomorpha</taxon>
        <taxon>Ephydroidea</taxon>
        <taxon>Drosophilidae</taxon>
        <taxon>Drosophila</taxon>
        <taxon>Sophophora</taxon>
    </lineage>
</organism>
<feature type="chain" id="PRO_0000458898" description="Protein Loquacious">
    <location>
        <begin position="1"/>
        <end position="465"/>
    </location>
</feature>
<feature type="domain" description="DRBM 1" evidence="1">
    <location>
        <begin position="135"/>
        <end position="206"/>
    </location>
</feature>
<feature type="domain" description="DRBM 2" evidence="1">
    <location>
        <begin position="250"/>
        <end position="318"/>
    </location>
</feature>
<feature type="domain" description="DRBM 3" evidence="1">
    <location>
        <begin position="393"/>
        <end position="461"/>
    </location>
</feature>
<feature type="region of interest" description="Important for homodimerization and interaction with Dcr-1" evidence="15">
    <location>
        <begin position="1"/>
        <end position="392"/>
    </location>
</feature>
<feature type="region of interest" description="Not required for interaction with Dcr-1" evidence="7 15">
    <location>
        <begin position="1"/>
        <end position="379"/>
    </location>
</feature>
<feature type="region of interest" description="Necessary for enhancing pre-miRNA processing by Dcr-1" evidence="7">
    <location>
        <begin position="1"/>
        <end position="337"/>
    </location>
</feature>
<feature type="region of interest" description="Necessary for promoting preferential binding of Dcr-2 to the less stably base paired ends of siRNAs" evidence="18">
    <location>
        <begin position="129"/>
        <end position="322"/>
    </location>
</feature>
<feature type="region of interest" description="Sufficient for binding RNA" evidence="18">
    <location>
        <begin position="129"/>
        <end position="211"/>
    </location>
</feature>
<feature type="region of interest" description="Enables simultaneous binding of both DRBM 1 and 2 domains to dsRNA" evidence="18">
    <location>
        <begin position="209"/>
        <end position="249"/>
    </location>
</feature>
<feature type="region of interest" description="Disordered" evidence="2">
    <location>
        <begin position="210"/>
        <end position="246"/>
    </location>
</feature>
<feature type="region of interest" description="Necessary and sufficient for enhancing processing of pre-miRNAs by Dcr-1" evidence="7">
    <location>
        <begin position="220"/>
        <end position="465"/>
    </location>
</feature>
<feature type="region of interest" description="Sufficient for binding RNA" evidence="18">
    <location>
        <begin position="245"/>
        <end position="322"/>
    </location>
</feature>
<feature type="region of interest" description="Necessary for binding pre-miRNA" evidence="7">
    <location>
        <begin position="308"/>
        <end position="309"/>
    </location>
</feature>
<feature type="region of interest" description="Necessary for interaction with Dcr-1" evidence="7">
    <location>
        <begin position="340"/>
        <end position="465"/>
    </location>
</feature>
<feature type="region of interest" description="Sufficent for binding to Dcr-1" evidence="15">
    <location>
        <begin position="392"/>
        <end position="463"/>
    </location>
</feature>
<feature type="compositionally biased region" description="Polar residues" evidence="2">
    <location>
        <begin position="211"/>
        <end position="223"/>
    </location>
</feature>
<feature type="compositionally biased region" description="Gly residues" evidence="2">
    <location>
        <begin position="228"/>
        <end position="242"/>
    </location>
</feature>
<feature type="splice variant" id="VSP_062002" description="In isoform PA.">
    <location>
        <begin position="338"/>
        <end position="383"/>
    </location>
</feature>
<feature type="splice variant" id="VSP_062003" description="In isoform PC.">
    <original>PRSSENYYGELKDISVPTLTTQHSNKVSQFHKTLKNATGKKLLKLQ</original>
    <variation>NESVKHLFHTKVICFNSPLACVISNVCEMQWRKETKNFALLFTAPQ</variation>
    <location>
        <begin position="338"/>
        <end position="383"/>
    </location>
</feature>
<feature type="splice variant" id="VSP_062004" description="In isoform PD.">
    <original>PRSSENYYGELKDISVPTLTTQ</original>
    <variation>VSIIQDIDRYEQVSKDFEFIKI</variation>
    <location>
        <begin position="338"/>
        <end position="359"/>
    </location>
</feature>
<feature type="splice variant" id="VSP_062005" description="In isoform PD.">
    <location>
        <begin position="360"/>
        <end position="465"/>
    </location>
</feature>
<feature type="splice variant" id="VSP_062006" description="In isoform PC.">
    <location>
        <begin position="384"/>
        <end position="465"/>
    </location>
</feature>
<feature type="mutagenesis site" description="Abolishes interaction with pre-miRNA (pre let 7) in the presence of Dcr-1." evidence="7">
    <original>AA</original>
    <variation>LL</variation>
    <location>
        <begin position="308"/>
        <end position="309"/>
    </location>
</feature>
<feature type="mutagenesis site" description="Strong reduction in Dcr-1 activity." evidence="15">
    <original>LLKL</original>
    <variation>AAKA</variation>
    <location>
        <begin position="379"/>
        <end position="382"/>
    </location>
</feature>
<feature type="mutagenesis site" description="Strong reduction in Dcr-1 activity." evidence="15">
    <original>F</original>
    <variation>A</variation>
    <location>
        <position position="419"/>
    </location>
</feature>
<feature type="mutagenesis site" description="Decreased binding to Dcr-1." evidence="15">
    <original>L</original>
    <variation>R</variation>
    <location>
        <position position="426"/>
    </location>
</feature>
<feature type="mutagenesis site" description="Loss of activity, abolishes interaction with Dcr-1 and therefore does not enhance pre-miRNA processing by the dicer." evidence="7">
    <location>
        <begin position="440"/>
        <end position="465"/>
    </location>
</feature>
<feature type="helix" evidence="46">
    <location>
        <begin position="136"/>
        <end position="145"/>
    </location>
</feature>
<feature type="strand" evidence="46">
    <location>
        <begin position="152"/>
        <end position="160"/>
    </location>
</feature>
<feature type="strand" evidence="46">
    <location>
        <begin position="165"/>
        <end position="173"/>
    </location>
</feature>
<feature type="strand" evidence="46">
    <location>
        <begin position="175"/>
        <end position="178"/>
    </location>
</feature>
<feature type="strand" evidence="46">
    <location>
        <begin position="180"/>
        <end position="188"/>
    </location>
</feature>
<feature type="helix" evidence="46">
    <location>
        <begin position="189"/>
        <end position="203"/>
    </location>
</feature>
<feature type="helix" evidence="46">
    <location>
        <begin position="254"/>
        <end position="261"/>
    </location>
</feature>
<feature type="strand" evidence="46">
    <location>
        <begin position="268"/>
        <end position="273"/>
    </location>
</feature>
<feature type="strand" evidence="46">
    <location>
        <begin position="278"/>
        <end position="280"/>
    </location>
</feature>
<feature type="strand" evidence="46">
    <location>
        <begin position="283"/>
        <end position="288"/>
    </location>
</feature>
<feature type="strand" evidence="46">
    <location>
        <begin position="293"/>
        <end position="300"/>
    </location>
</feature>
<feature type="helix" evidence="46">
    <location>
        <begin position="301"/>
        <end position="318"/>
    </location>
</feature>
<feature type="helix" evidence="46">
    <location>
        <begin position="359"/>
        <end position="373"/>
    </location>
</feature>
<feature type="helix" evidence="46">
    <location>
        <begin position="377"/>
        <end position="383"/>
    </location>
</feature>
<feature type="strand" evidence="46">
    <location>
        <begin position="390"/>
        <end position="392"/>
    </location>
</feature>
<feature type="helix" evidence="45">
    <location>
        <begin position="398"/>
        <end position="404"/>
    </location>
</feature>
<feature type="strand" evidence="45">
    <location>
        <begin position="409"/>
        <end position="415"/>
    </location>
</feature>
<feature type="strand" evidence="46">
    <location>
        <begin position="419"/>
        <end position="421"/>
    </location>
</feature>
<feature type="strand" evidence="45">
    <location>
        <begin position="423"/>
        <end position="429"/>
    </location>
</feature>
<feature type="strand" evidence="45">
    <location>
        <begin position="431"/>
        <end position="443"/>
    </location>
</feature>
<feature type="helix" evidence="45">
    <location>
        <begin position="444"/>
        <end position="459"/>
    </location>
</feature>
<feature type="region of interest" description="Required for binding to Dcr-2 and to fully enhance Dcr-2 mediated cleavage of 3' overhanging termini (3'ovr) and blunt termini (BLT) dsRNAs. However, this region is dispensable for binding the dsRNA substrates" evidence="12 17">
    <location sequence="Q9VJY9-4">
        <begin position="338"/>
        <end position="359"/>
    </location>
</feature>
<feature type="mutagenesis site" description="Reduced interaction with Dcr-2." evidence="22">
    <original>Y</original>
    <variation>A</variation>
    <location sequence="Q9VJY9-4">
        <position position="347"/>
    </location>
</feature>
<feature type="mutagenesis site" description="Reduced interaction with Dcr-2." evidence="22">
    <original>F</original>
    <variation>D</variation>
    <location sequence="Q9VJY9-4">
        <position position="356"/>
    </location>
</feature>
<feature type="mutagenesis site" description="Reduced interaction with Dcr-2." evidence="22">
    <original>I</original>
    <variation>D</variation>
    <location sequence="Q9VJY9-4">
        <position position="359"/>
    </location>
</feature>
<gene>
    <name evidence="26 33" type="primary">loqs</name>
    <name evidence="28" type="synonym">dRax</name>
    <name evidence="28" type="synonym">loq</name>
    <name evidence="25" type="synonym">r3d1</name>
    <name evidence="28" type="synonym">TRBP</name>
    <name evidence="33" type="ORF">CG6866</name>
</gene>
<protein>
    <recommendedName>
        <fullName evidence="26">Protein Loquacious</fullName>
    </recommendedName>
</protein>
<comment type="function">
    <molecule>Isoform PA</molecule>
    <text evidence="6 8 10 13 15 16 19">Double-stranded RNA-binding protein which can function in gene silencing by acting with Dcr-1 to enhance its ATP-independent processing of a specific subset of precursor micro-RNAs (pre-miRNAs) to mature miRNAs (PubMed:19635780, PubMed:26769856, PubMed:27184838). Some reports found it was able to enhance the efficiency of pre-miRNA processing by Dcr-1, and can shift the cleavage site of Dcr-1 altering the length of the mature miRNAs produced by Dcr-1 alone (PubMed:17320391, PubMed:23063653, PubMed:29373753). However, in contrast to isoform PB, it is not necessary or sufficient for enhancing miRNA biogenesis, and is not required for development or female germline stem cell (GSC) maintenance (PubMed:17320391, PubMed:23063653). Another report also found that it decreases binding of Dcr-1 to the miRNA substrate let-7 (PubMed:17928574).</text>
</comment>
<comment type="function">
    <molecule>Isoform PB</molecule>
    <text evidence="3 5 6 7 8 10 13 15 16 19 24">Double-stranded RNA-binding protein which functions in gene silencing by acting with Dcr-1 to enhance its ATP-independent processing of a specific subset of precursor micro-RNAs (pre-miRNAs) to mature miRNAs (PubMed:15918769, PubMed:15985611, PubMed:17666393, PubMed:17928574, PubMed:19635780, PubMed:26769856, PubMed:27184838, PubMed:36182693). Function is essential for development and female germline stem cell (GSC) maintenance (PubMed:15985611, PubMed:17320391, PubMed:23063653). Functions in miRNA-mediated gene silencing by enhancing the binding affinity and specific pre-miRNA processing activity of Dcr-1, and as part of the loqs-PB-Dcr-1 complex, is involved in substrate discrimination, correctly positioning the pre-miRNA in the Dcr-1 catalytic center for cleavage, and miRNA loading into the Argonaute 1 (Ago1)-containing RNA-induced silencing complex (miRISC) (PubMed:15918769, PubMed:17666393, PubMed:17928574, PubMed:23063653, PubMed:27184838, PubMed:36182693). Increases the binding affinity of Dcr-1 to pre-miRNAs, thereby increasing dicing efficiency and broadening the range of substrates that can be processed by the dicer (PubMed:17928574, PubMed:23063653, PubMed:27184838, PubMed:36182693). It may also confer the substrate specificity of Dcr-1 towards pre-miRNAs, as in its absence Dcr-1 displays siRNA-generating activity towards long dsRNA substrates (PubMed:15918769). It can also shift the cleavage site of Dcr-1 for a small number of pre-miRNAs, changing the length of the mature miRNAs produced by Dcr-1 alone (PubMed:23063653, PubMed:29373753). Increases the range of pre-miRNAs that can be processed by Dcr-1, by enhancing the dicing of suboptimal hairpin substrates including ones with mismatches at the dicing site (PubMed:27184838, PubMed:29373753). This function may also promote the generation of novel miRNA genes as it appears to have an important role in processing evolutionarily young miRNA genes, suggesting that it may also enhance dicing of substrates that have not acquired hairpin features required for efficient miRNA processing (PubMed:27184838). As newly emerged miRNAs can have deleterious or beneficial effects on fitness, this function is likely part of a regulatory system that prevents excessive emergence of active miRNA genes and thus keeps them within an optimal range (PubMed:27184838). Also forms a RISC loading complex (miRLC) with Dcr-1 to mediate Ago1-loading of mature miRNAs into the RNA-induced silencing complex (miRISC) (PubMed:15918769, PubMed:36182693). In female ovaries, required for Dcr-1 to generate the twenty-three nucleotide isomiR variant of miR-307a which is able to repress its targets Gk2 and tara (PubMed:23063653).</text>
</comment>
<comment type="function">
    <molecule>Isoform PD</molecule>
    <text evidence="10 11 12 13 14 16 17 18 20 21 23">Double-stranded RNA-binding protein which has an essential role in gene silencing (RNAi) by acting with Dcr-2 to enhance its ATP-dependent processing of a subset of endogenous (endo) and exogenous (exo) dsRNAs into short interfering RNAs (siRNAs) (PubMed:19635780, PubMed:19644447, PubMed:21245036, PubMed:23063653, PubMed:25891075, PubMed:27184838, PubMed:28874570, PubMed:29040648, PubMed:29550490, PubMed:34590626). Functions in RNAi by increasing the initial binding affinity of Dcr-2 to certain dsRNA substrates, and in the absence of r2d2, may also function in siRNA loading into the Argonaute 2 (AGO2)-containing RNA-induced silencing complex (siRISC) and guide strand selection for target silencing by the siRISC (PubMed:19635780, PubMed:19644447, PubMed:21245036, PubMed:29550490). Promotes Dcr-2 cleavage of a subset of dsRNAs, including endo-dsRNAs derived from convergent transcription, inverted repeats and transposons (PubMed:19635780, PubMed:19644447, PubMed:21245036, PubMed:23063653, PubMed:29550490). Also enables Dcr-2 to produce hairpin-derived endo-siRNAs in the presence of cellular inhibitory inorganic phosphate, likely by increasing the binding affinity of the enzyme to the hairpin dsRNAs allowing the dsRNA to displace phosphate bound to Dcr-2 (PubMed:29550490). According to many reports, the cleavage reaction mode of Dcr-2 changes according to the termini of the dsRNA substrate, with the enzyme displaying a preference for processing blunt termini (BLT), likely non-self dsRNAs, over dsRNAs with 2 nucleotides 3' overhanging (3'ovr) termini, which are typically the structure of endo-dsRNAs (PubMed:25891075, PubMed:29550490, PubMed:34590626). According to many reports, interaction with Loqs-PD modifies the molecular recognition mechanisms of Dcr-2 towards sub-optimal 3'ovr dsRNA substrates and thus enables the dicer to cleave endo-dsRNA templates with diverse termini (PubMed:25891075, PubMed:29550490). However, according to another report, the mode of cleavage reaction is not affected by the presence or absence of loqs-PD (PubMed:34590626). In the absence of r2d2, may also form an alternative RISC loading complex (siRLC) with Dcr-2 to mediate AGO2-loading of endo- and exo-siRNAs into the RNA-induced silencing complex (siRISC) (PubMed:21245036, PubMed:29040648). Many reports suggest that loqs-PD and r2d2 function independently with dcr-2 in distinct siRNA pathways, and may even compete for binding to the enzyme (PubMed:21245036, PubMed:29040648). Loaded siRNAs serve as a guide to direct the siRISC to complementary RNAs to degrade them or prevent their translation (PubMed:29040648). The siRLC plays an important role in the ATP-dependent asymmetry sensing of the duplex, and is therefore also responsible for the selection of the strand that ultimately acts as the guide siRNA for the siRISC (PubMed:29040648). Thermodynamically asymmetric endo-siRNAs can be pre-oriented in the siRLC by the Loqs-PD and DCr-2 complex, which preferentially binds to the most thermodynamically stable strand prior to loading into the siRISC (PubMed:29040648). Appears to be involved in promoting double-strand breaks (DSBs) following exposure to a low-dose/dose-rate (LDR) of ionizing radiation (PubMed:36057690).</text>
</comment>
<comment type="subunit">
    <text evidence="18">Homodimer.</text>
</comment>
<comment type="subunit">
    <molecule>Isoform PA</molecule>
    <text evidence="4 7 10 11">Interacts with dicer enzyme Dcr-1.</text>
</comment>
<comment type="subunit">
    <molecule>Isoform PB</molecule>
    <text evidence="3 4 5 7 9 10 11 15 24">Component of the miRNA-directed RNA-induced loading complex (miRLC), composed of at least Dcr-1, AGO1 and loqs isoform PB (loqs-PB), which processes pre-miRNAs and loads the resulting miRNAs into the Argonaute 1 (AGO1)-containing RNA-induced silencing complex (miRISC) to target the selective destruction of homologous RNAs (PubMed:15918769, PubMed:15985611, PubMed:19451544). Interacts (via DRBM 3 domain) with dicer enzyme Dcr-1 (via helicase domain) (PubMed:15918769, PubMed:15918770, PubMed:15985611, PubMed:17666393, PubMed:19451544, PubMed:19635780, PubMed:19644447, PubMed:26769856, PubMed:36182693). Different regions of the Dcr-1-loqs-PB heterodimer collaborate to recognize, bind and position the pre-miRNA for Dcr-1 mediated cleavage (PubMed:36182693). In the absence of miRNA substrates, the heterodimer favors a closed, catalytically incompetent, conformation, whereas binding of authentic pre-miRNA substrates stabilizes the relatively rare open, catalytically competent, conformation of the heterodimer (PubMed:36182693). During substrate recognition, the Dcr-1 PAZ domain and pre-miRNA interact with the DRBM 1 domain of loqs-PB, which likely contributes to substrate recognition and stabilization (PubMed:36182693). At the miRNA binding stage, the Dcr-1 DRBM domain and the loqs-PB DRBM domains then bind the pre-miRNA in tandem to form a tight 'belt' around the pre-miRNA stem, the pre-miRNA loop is docked in the loop-binding region formed by DUF283, DRBM and part of the helicase domain of Dcr-1, and the loqs-PB DRBM 1 and the wing domain of Dcr-1 act together to bind the 5' and 3' pre-miRNA termini within the PAZ and platform domains of Dcr-1 (PubMed:36182693). These interactions between the proteins and their pre-miRNA substrate stabilize a distorted form of the pre-miRNA and position the scissile phosphodiester bonds of the pre-miRNA at the RNase III catalytic cleavage sites of Dcr-1 (PubMed:36182693). Following Dcr-1 mediated cleavage, the miRNA duplex remains bound to loqs-PB DRBM 1, which dissociates from the Dcr-1 RNase III 1 domain but remains in contact with the PAZ and wing domains suggesting that the heterodimer presents the mature miRNA to AGO2 for loading into the RNA-induced silencing complex (miRISC) (PubMed:36182693).</text>
</comment>
<comment type="subunit">
    <molecule>Isoform PC</molecule>
    <text evidence="7 10">Able to interact with dicer enzyme Dcr-1 (PubMed:17666393). However, the relevance of such an interaction is unclear in vivo and another report found that it did not interact with Dcr-1 (PubMed:19635780).</text>
</comment>
<comment type="subunit">
    <molecule>Isoform PD</molecule>
    <text evidence="10 11 12 17 18 22">Monomer (PubMed:28874570). Interacts (via C-terminus) with dicer enzyme Dcr-2 (via N-terminus); interaction is required for RNAi activity in producing siRNAs from a subset of endo- and exo-dsRNAs, and in the alternative siRLC, the interaction enhances the binding preference of the protein for the thermodynamically more stable ends of endogenous siRNAs (PubMed:19635780, PubMed:19644447, PubMed:21245036, PubMed:28874570, PubMed:29040648, PubMed:35768513). Interaction with Dcr-2 is RNA independent, however the isoform must bind both dsRNA and Dcr-2 to enhance Dcr-2 cleavage activity (PubMed:28874570). Does not interact with Dcr-1 (PubMed:19644447).</text>
</comment>
<comment type="interaction">
    <interactant intactId="EBI-162836">
        <id>Q9VJY9</id>
    </interactant>
    <interactant intactId="EBI-112170">
        <id>Q9VCU9</id>
        <label>Dcr-1</label>
    </interactant>
    <organismsDiffer>false</organismsDiffer>
    <experiments>14</experiments>
</comment>
<comment type="subcellular location">
    <subcellularLocation>
        <location evidence="3">Cytoplasm</location>
    </subcellularLocation>
    <subcellularLocation>
        <location evidence="5">Cytoplasm</location>
        <location evidence="5">Cytosol</location>
    </subcellularLocation>
</comment>
<comment type="alternative products">
    <event type="alternative splicing"/>
    <isoform>
        <id>Q9VJY9-1</id>
        <name evidence="26 33">PB</name>
        <name evidence="26">loqs-PB</name>
        <name evidence="25">r3d1-L</name>
        <sequence type="displayed"/>
    </isoform>
    <isoform>
        <id>Q9VJY9-2</id>
        <name evidence="26 33">PA</name>
        <name evidence="26">loqs-PA</name>
        <name evidence="25">r3d1-S</name>
        <sequence type="described" ref="VSP_062002"/>
    </isoform>
    <isoform>
        <id>Q9VJY9-3</id>
        <name evidence="26 33">PC</name>
        <name evidence="26">loqs-PC</name>
        <sequence type="described" ref="VSP_062003 VSP_062006"/>
    </isoform>
    <isoform>
        <id>Q9VJY9-4</id>
        <name evidence="26 33">PD</name>
        <name evidence="26">loqs-PD</name>
        <sequence type="described" ref="VSP_062004 VSP_062005"/>
    </isoform>
</comment>
<comment type="tissue specificity">
    <molecule>Isoform PA</molecule>
    <text evidence="4">Strong expression in males and females (PubMed:15918770). Expression in ovaries is relatively weak (PubMed:15918770).</text>
</comment>
<comment type="tissue specificity">
    <molecule>Isoform PB</molecule>
    <text evidence="4">Strong expression in females and relatively weak expression in males (PubMed:15918770). Strong expression in ovaries (PubMed:15918770).</text>
</comment>
<comment type="developmental stage">
    <molecule>Isoform PA</molecule>
    <text evidence="6">Expressed both maternally and zygotically (at protein level). Detected in embryos, larvae and adults (at protein level).</text>
</comment>
<comment type="developmental stage">
    <molecule>Isoform PB</molecule>
    <text evidence="6">Expressed both maternally and zygotically (at protein level). Detected in embryos, larvae and adults (at protein level).</text>
</comment>
<comment type="induction">
    <molecule>Isoform PD</molecule>
    <text evidence="23">Slightly down-regulated in response to a low-dose/dose-rate (LDR) of ionizing radiation.</text>
</comment>
<comment type="domain">
    <text evidence="17 18 21 24">RNA-binding DRBM domains 1 and 2 bind dsRNA while DRBM 3 binds Dcr-1 (PubMed:29040648, PubMed:34590626, PubMed:36182693). The RNA-binding DRBM 1 and 2 domains are able to bind dsRNA independently (PubMed:34590626). The DRBM domains appears to bind to the RNA duplex and then slide along the siRNA helix to the ends of the siRNA (PubMed:29040648). The DRBMs display a preference for binding to the more thermodynamically stable ends of the siRNA which is enhanced by interaction with Dcr-2 (PubMed:29040648). This suggests that the domains may also function to pre-orientate the guide strand prior to loading into the (AGO2)-containing RNA-induced silencing complex (siRISC) (PubMed:29040648). Both of the DRBM 1 and 2 domains are required for optimal Dcr-2 mediated cleavage of 3' overhanging termini (3'ovr) dsRNAs, whereas only the DRBM 3 domain appears to be necessary for Dcr-2 mediated cleavage of blunt termini (BLT) dsRNAs (PubMed:28874570).</text>
</comment>
<comment type="disruption phenotype">
    <text evidence="6">Larval lethal and displays miRNA processing defects (PubMed:17320391). Embryos do not develop past the first instar larvae stage (PubMed:17320391). Most females contain ovaries with empty germaria accompanied by one or two terminal stage egg chambers (PubMed:17320391). Accumulates pre-miRNAs and displays a reduction in mature miRNAs (PubMed:17320391).</text>
</comment>
<comment type="disruption phenotype">
    <molecule>Isoform PA</molecule>
    <text evidence="13">No significant effect on female or male fertility.</text>
</comment>
<comment type="disruption phenotype">
    <molecule>Isoform PB</molecule>
    <text evidence="13">Female fertility is severely reduced whereas male fertility is relatively unaffected (PubMed:23063653). Females lay very few eggs, and most of the eggs that are laid have abnormal appendages and do not hatch (PubMed:23063653).</text>
</comment>
<comment type="disruption phenotype">
    <molecule>Isoform PD</molecule>
    <text evidence="13">No significant effect on female or male fertility.</text>
</comment>
<comment type="miscellaneous">
    <text evidence="3">The name 'Loquacious' refers to the mutants being 'very talkative' as they display a loss of several types of gene silencing.</text>
</comment>
<proteinExistence type="evidence at protein level"/>
<evidence type="ECO:0000255" key="1">
    <source>
        <dbReference type="PROSITE-ProRule" id="PRU00266"/>
    </source>
</evidence>
<evidence type="ECO:0000256" key="2">
    <source>
        <dbReference type="SAM" id="MobiDB-lite"/>
    </source>
</evidence>
<evidence type="ECO:0000269" key="3">
    <source>
    </source>
</evidence>
<evidence type="ECO:0000269" key="4">
    <source>
    </source>
</evidence>
<evidence type="ECO:0000269" key="5">
    <source>
    </source>
</evidence>
<evidence type="ECO:0000269" key="6">
    <source>
    </source>
</evidence>
<evidence type="ECO:0000269" key="7">
    <source>
    </source>
</evidence>
<evidence type="ECO:0000269" key="8">
    <source>
    </source>
</evidence>
<evidence type="ECO:0000269" key="9">
    <source>
    </source>
</evidence>
<evidence type="ECO:0000269" key="10">
    <source>
    </source>
</evidence>
<evidence type="ECO:0000269" key="11">
    <source>
    </source>
</evidence>
<evidence type="ECO:0000269" key="12">
    <source>
    </source>
</evidence>
<evidence type="ECO:0000269" key="13">
    <source>
    </source>
</evidence>
<evidence type="ECO:0000269" key="14">
    <source>
    </source>
</evidence>
<evidence type="ECO:0000269" key="15">
    <source>
    </source>
</evidence>
<evidence type="ECO:0000269" key="16">
    <source>
    </source>
</evidence>
<evidence type="ECO:0000269" key="17">
    <source>
    </source>
</evidence>
<evidence type="ECO:0000269" key="18">
    <source>
    </source>
</evidence>
<evidence type="ECO:0000269" key="19">
    <source>
    </source>
</evidence>
<evidence type="ECO:0000269" key="20">
    <source>
    </source>
</evidence>
<evidence type="ECO:0000269" key="21">
    <source>
    </source>
</evidence>
<evidence type="ECO:0000269" key="22">
    <source>
    </source>
</evidence>
<evidence type="ECO:0000269" key="23">
    <source>
    </source>
</evidence>
<evidence type="ECO:0000269" key="24">
    <source>
    </source>
</evidence>
<evidence type="ECO:0000303" key="25">
    <source>
    </source>
</evidence>
<evidence type="ECO:0000303" key="26">
    <source>
    </source>
</evidence>
<evidence type="ECO:0000305" key="27"/>
<evidence type="ECO:0000312" key="28">
    <source>
        <dbReference type="EMBL" id="AAF53295.2"/>
    </source>
</evidence>
<evidence type="ECO:0000312" key="29">
    <source>
        <dbReference type="EMBL" id="AAL48692.1"/>
    </source>
</evidence>
<evidence type="ECO:0000312" key="30">
    <source>
        <dbReference type="EMBL" id="AAY40789.1"/>
    </source>
</evidence>
<evidence type="ECO:0000312" key="31">
    <source>
        <dbReference type="EMBL" id="AAZ40191.1"/>
    </source>
</evidence>
<evidence type="ECO:0000312" key="32">
    <source>
        <dbReference type="EMBL" id="AAZ40192.1"/>
    </source>
</evidence>
<evidence type="ECO:0000312" key="33">
    <source>
        <dbReference type="FlyBase" id="FBgn0032515"/>
    </source>
</evidence>
<evidence type="ECO:0000312" key="34">
    <source>
        <dbReference type="Proteomes" id="UP000000803"/>
    </source>
</evidence>
<evidence type="ECO:0007744" key="35">
    <source>
        <dbReference type="PDB" id="4X8W"/>
    </source>
</evidence>
<evidence type="ECO:0007744" key="36">
    <source>
        <dbReference type="PDB" id="5NPA"/>
    </source>
</evidence>
<evidence type="ECO:0007744" key="37">
    <source>
        <dbReference type="PDB" id="7W0A"/>
    </source>
</evidence>
<evidence type="ECO:0007744" key="38">
    <source>
        <dbReference type="PDB" id="7W0B"/>
    </source>
</evidence>
<evidence type="ECO:0007744" key="39">
    <source>
        <dbReference type="PDB" id="8DFV"/>
    </source>
</evidence>
<evidence type="ECO:0007744" key="40">
    <source>
        <dbReference type="PDB" id="8DG5"/>
    </source>
</evidence>
<evidence type="ECO:0007744" key="41">
    <source>
        <dbReference type="PDB" id="8DG7"/>
    </source>
</evidence>
<evidence type="ECO:0007744" key="42">
    <source>
        <dbReference type="PDB" id="8DGA"/>
    </source>
</evidence>
<evidence type="ECO:0007744" key="43">
    <source>
        <dbReference type="PDB" id="8DGI"/>
    </source>
</evidence>
<evidence type="ECO:0007744" key="44">
    <source>
        <dbReference type="PDB" id="8DGJ"/>
    </source>
</evidence>
<evidence type="ECO:0007829" key="45">
    <source>
        <dbReference type="PDB" id="4X8W"/>
    </source>
</evidence>
<evidence type="ECO:0007829" key="46">
    <source>
        <dbReference type="PDB" id="8DFV"/>
    </source>
</evidence>
<reference evidence="31 32" key="1">
    <citation type="journal article" date="2005" name="Genes Dev.">
        <title>Dicer-1 and R3D1-L catalyze microRNA maturation in Drosophila.</title>
        <authorList>
            <person name="Jiang F."/>
            <person name="Ye X."/>
            <person name="Liu X."/>
            <person name="Fincher L."/>
            <person name="McKearin D."/>
            <person name="Liu Q."/>
        </authorList>
    </citation>
    <scope>NUCLEOTIDE SEQUENCE [MRNA] (ISOFORMS PB AND PD)</scope>
    <scope>FUNCTION (ISOFORM PB)</scope>
    <scope>IDENTIFICATION IN THE MIRNA-RISC LOADING COMPLEX (ISOFORM PB)</scope>
    <scope>SUBCELLULAR LOCATION</scope>
</reference>
<reference evidence="34" key="2">
    <citation type="journal article" date="2000" name="Science">
        <title>The genome sequence of Drosophila melanogaster.</title>
        <authorList>
            <person name="Adams M.D."/>
            <person name="Celniker S.E."/>
            <person name="Holt R.A."/>
            <person name="Evans C.A."/>
            <person name="Gocayne J.D."/>
            <person name="Amanatides P.G."/>
            <person name="Scherer S.E."/>
            <person name="Li P.W."/>
            <person name="Hoskins R.A."/>
            <person name="Galle R.F."/>
            <person name="George R.A."/>
            <person name="Lewis S.E."/>
            <person name="Richards S."/>
            <person name="Ashburner M."/>
            <person name="Henderson S.N."/>
            <person name="Sutton G.G."/>
            <person name="Wortman J.R."/>
            <person name="Yandell M.D."/>
            <person name="Zhang Q."/>
            <person name="Chen L.X."/>
            <person name="Brandon R.C."/>
            <person name="Rogers Y.-H.C."/>
            <person name="Blazej R.G."/>
            <person name="Champe M."/>
            <person name="Pfeiffer B.D."/>
            <person name="Wan K.H."/>
            <person name="Doyle C."/>
            <person name="Baxter E.G."/>
            <person name="Helt G."/>
            <person name="Nelson C.R."/>
            <person name="Miklos G.L.G."/>
            <person name="Abril J.F."/>
            <person name="Agbayani A."/>
            <person name="An H.-J."/>
            <person name="Andrews-Pfannkoch C."/>
            <person name="Baldwin D."/>
            <person name="Ballew R.M."/>
            <person name="Basu A."/>
            <person name="Baxendale J."/>
            <person name="Bayraktaroglu L."/>
            <person name="Beasley E.M."/>
            <person name="Beeson K.Y."/>
            <person name="Benos P.V."/>
            <person name="Berman B.P."/>
            <person name="Bhandari D."/>
            <person name="Bolshakov S."/>
            <person name="Borkova D."/>
            <person name="Botchan M.R."/>
            <person name="Bouck J."/>
            <person name="Brokstein P."/>
            <person name="Brottier P."/>
            <person name="Burtis K.C."/>
            <person name="Busam D.A."/>
            <person name="Butler H."/>
            <person name="Cadieu E."/>
            <person name="Center A."/>
            <person name="Chandra I."/>
            <person name="Cherry J.M."/>
            <person name="Cawley S."/>
            <person name="Dahlke C."/>
            <person name="Davenport L.B."/>
            <person name="Davies P."/>
            <person name="de Pablos B."/>
            <person name="Delcher A."/>
            <person name="Deng Z."/>
            <person name="Mays A.D."/>
            <person name="Dew I."/>
            <person name="Dietz S.M."/>
            <person name="Dodson K."/>
            <person name="Doup L.E."/>
            <person name="Downes M."/>
            <person name="Dugan-Rocha S."/>
            <person name="Dunkov B.C."/>
            <person name="Dunn P."/>
            <person name="Durbin K.J."/>
            <person name="Evangelista C.C."/>
            <person name="Ferraz C."/>
            <person name="Ferriera S."/>
            <person name="Fleischmann W."/>
            <person name="Fosler C."/>
            <person name="Gabrielian A.E."/>
            <person name="Garg N.S."/>
            <person name="Gelbart W.M."/>
            <person name="Glasser K."/>
            <person name="Glodek A."/>
            <person name="Gong F."/>
            <person name="Gorrell J.H."/>
            <person name="Gu Z."/>
            <person name="Guan P."/>
            <person name="Harris M."/>
            <person name="Harris N.L."/>
            <person name="Harvey D.A."/>
            <person name="Heiman T.J."/>
            <person name="Hernandez J.R."/>
            <person name="Houck J."/>
            <person name="Hostin D."/>
            <person name="Houston K.A."/>
            <person name="Howland T.J."/>
            <person name="Wei M.-H."/>
            <person name="Ibegwam C."/>
            <person name="Jalali M."/>
            <person name="Kalush F."/>
            <person name="Karpen G.H."/>
            <person name="Ke Z."/>
            <person name="Kennison J.A."/>
            <person name="Ketchum K.A."/>
            <person name="Kimmel B.E."/>
            <person name="Kodira C.D."/>
            <person name="Kraft C.L."/>
            <person name="Kravitz S."/>
            <person name="Kulp D."/>
            <person name="Lai Z."/>
            <person name="Lasko P."/>
            <person name="Lei Y."/>
            <person name="Levitsky A.A."/>
            <person name="Li J.H."/>
            <person name="Li Z."/>
            <person name="Liang Y."/>
            <person name="Lin X."/>
            <person name="Liu X."/>
            <person name="Mattei B."/>
            <person name="McIntosh T.C."/>
            <person name="McLeod M.P."/>
            <person name="McPherson D."/>
            <person name="Merkulov G."/>
            <person name="Milshina N.V."/>
            <person name="Mobarry C."/>
            <person name="Morris J."/>
            <person name="Moshrefi A."/>
            <person name="Mount S.M."/>
            <person name="Moy M."/>
            <person name="Murphy B."/>
            <person name="Murphy L."/>
            <person name="Muzny D.M."/>
            <person name="Nelson D.L."/>
            <person name="Nelson D.R."/>
            <person name="Nelson K.A."/>
            <person name="Nixon K."/>
            <person name="Nusskern D.R."/>
            <person name="Pacleb J.M."/>
            <person name="Palazzolo M."/>
            <person name="Pittman G.S."/>
            <person name="Pan S."/>
            <person name="Pollard J."/>
            <person name="Puri V."/>
            <person name="Reese M.G."/>
            <person name="Reinert K."/>
            <person name="Remington K."/>
            <person name="Saunders R.D.C."/>
            <person name="Scheeler F."/>
            <person name="Shen H."/>
            <person name="Shue B.C."/>
            <person name="Siden-Kiamos I."/>
            <person name="Simpson M."/>
            <person name="Skupski M.P."/>
            <person name="Smith T.J."/>
            <person name="Spier E."/>
            <person name="Spradling A.C."/>
            <person name="Stapleton M."/>
            <person name="Strong R."/>
            <person name="Sun E."/>
            <person name="Svirskas R."/>
            <person name="Tector C."/>
            <person name="Turner R."/>
            <person name="Venter E."/>
            <person name="Wang A.H."/>
            <person name="Wang X."/>
            <person name="Wang Z.-Y."/>
            <person name="Wassarman D.A."/>
            <person name="Weinstock G.M."/>
            <person name="Weissenbach J."/>
            <person name="Williams S.M."/>
            <person name="Woodage T."/>
            <person name="Worley K.C."/>
            <person name="Wu D."/>
            <person name="Yang S."/>
            <person name="Yao Q.A."/>
            <person name="Ye J."/>
            <person name="Yeh R.-F."/>
            <person name="Zaveri J.S."/>
            <person name="Zhan M."/>
            <person name="Zhang G."/>
            <person name="Zhao Q."/>
            <person name="Zheng L."/>
            <person name="Zheng X.H."/>
            <person name="Zhong F.N."/>
            <person name="Zhong W."/>
            <person name="Zhou X."/>
            <person name="Zhu S.C."/>
            <person name="Zhu X."/>
            <person name="Smith H.O."/>
            <person name="Gibbs R.A."/>
            <person name="Myers E.W."/>
            <person name="Rubin G.M."/>
            <person name="Venter J.C."/>
        </authorList>
    </citation>
    <scope>NUCLEOTIDE SEQUENCE [LARGE SCALE GENOMIC DNA]</scope>
    <source>
        <strain evidence="34">Berkeley</strain>
    </source>
</reference>
<reference evidence="34" key="3">
    <citation type="journal article" date="2002" name="Genome Biol.">
        <title>Annotation of the Drosophila melanogaster euchromatic genome: a systematic review.</title>
        <authorList>
            <person name="Misra S."/>
            <person name="Crosby M.A."/>
            <person name="Mungall C.J."/>
            <person name="Matthews B.B."/>
            <person name="Campbell K.S."/>
            <person name="Hradecky P."/>
            <person name="Huang Y."/>
            <person name="Kaminker J.S."/>
            <person name="Millburn G.H."/>
            <person name="Prochnik S.E."/>
            <person name="Smith C.D."/>
            <person name="Tupy J.L."/>
            <person name="Whitfield E.J."/>
            <person name="Bayraktaroglu L."/>
            <person name="Berman B.P."/>
            <person name="Bettencourt B.R."/>
            <person name="Celniker S.E."/>
            <person name="de Grey A.D.N.J."/>
            <person name="Drysdale R.A."/>
            <person name="Harris N.L."/>
            <person name="Richter J."/>
            <person name="Russo S."/>
            <person name="Schroeder A.J."/>
            <person name="Shu S.Q."/>
            <person name="Stapleton M."/>
            <person name="Yamada C."/>
            <person name="Ashburner M."/>
            <person name="Gelbart W.M."/>
            <person name="Rubin G.M."/>
            <person name="Lewis S.E."/>
        </authorList>
    </citation>
    <scope>GENOME REANNOTATION</scope>
    <source>
        <strain evidence="34">Berkeley</strain>
    </source>
</reference>
<reference evidence="29" key="4">
    <citation type="journal article" date="2002" name="Genome Biol.">
        <title>A Drosophila full-length cDNA resource.</title>
        <authorList>
            <person name="Stapleton M."/>
            <person name="Carlson J.W."/>
            <person name="Brokstein P."/>
            <person name="Yu C."/>
            <person name="Champe M."/>
            <person name="George R.A."/>
            <person name="Guarin H."/>
            <person name="Kronmiller B."/>
            <person name="Pacleb J.M."/>
            <person name="Park S."/>
            <person name="Wan K.H."/>
            <person name="Rubin G.M."/>
            <person name="Celniker S.E."/>
        </authorList>
    </citation>
    <scope>NUCLEOTIDE SEQUENCE [LARGE SCALE MRNA] (ISOFORM PB)</scope>
    <source>
        <strain>Berkeley</strain>
        <tissue>Embryo</tissue>
    </source>
</reference>
<reference evidence="30" key="5">
    <citation type="submission" date="2005-04" db="EMBL/GenBank/DDBJ databases">
        <title>Normal microRNA maturation by Dicer-1 and germ-line stem cell maintenance requires the double-stranded RNA-binding domain protein, loquacious.</title>
        <authorList>
            <person name="Forstemann K."/>
            <person name="Tomari Y."/>
            <person name="Du T."/>
            <person name="Vagin V.V."/>
            <person name="Denli A.M."/>
            <person name="Bratu D.P."/>
            <person name="Klattenhoff C."/>
            <person name="Theurkauf W.H."/>
            <person name="Zamore P.D."/>
        </authorList>
    </citation>
    <scope>NUCLEOTIDE SEQUENCE [MRNA] (ISOFORM PC)</scope>
</reference>
<reference evidence="27" key="6">
    <citation type="journal article" date="2009" name="EMBO J.">
        <title>Endo-siRNAs depend on a new isoform of loquacious and target artificially introduced, high-copy sequences.</title>
        <authorList>
            <person name="Hartig J.V."/>
            <person name="Esslinger S."/>
            <person name="Boettcher R."/>
            <person name="Saito K."/>
            <person name="Foerstemann K."/>
        </authorList>
    </citation>
    <scope>PARTIAL NUCLEOTIDE SEQUENCE [MRNA] (ISOFORM PD)</scope>
    <scope>FUNCTION (ISOFORM PD)</scope>
    <scope>INTERACTION WITH DCR-1 AND DCR-2 (ISOFORMS PA; PB AND PD)</scope>
</reference>
<reference evidence="27" key="7">
    <citation type="journal article" date="2005" name="PLoS Biol.">
        <title>Processing of pre-microRNAs by the Dicer-1-Loquacious complex in Drosophila cells.</title>
        <authorList>
            <person name="Saito K."/>
            <person name="Ishizuka A."/>
            <person name="Siomi H."/>
            <person name="Siomi M.C."/>
        </authorList>
    </citation>
    <scope>FUNCTION (ISOFORM PB)</scope>
    <scope>IDENTIFICATION IN THE MIRNA-RISC LOADING COMPLEX</scope>
    <scope>SUBCELLULAR LOCATION</scope>
</reference>
<reference evidence="27" key="8">
    <citation type="journal article" date="2005" name="PLoS Biol.">
        <title>Normal microRNA maturation and germ-line stem cell maintenance requires Loquacious, a double-stranded RNA-binding domain protein.</title>
        <authorList>
            <person name="Foerstemann K."/>
            <person name="Tomari Y."/>
            <person name="Du T."/>
            <person name="Vagin V.V."/>
            <person name="Denli A.M."/>
            <person name="Bratu D.P."/>
            <person name="Klattenhoff C."/>
            <person name="Theurkauf W.E."/>
            <person name="Zamore P.D."/>
        </authorList>
    </citation>
    <scope>INTERACTION WITH DCR-1 (ISOFORMS PA AND PB)</scope>
    <scope>TISSUE SPECIFICITY (ISOFORMS PA; PB AND PC)</scope>
</reference>
<reference evidence="27" key="9">
    <citation type="journal article" date="2007" name="Curr. Biol.">
        <title>The miRNA pathway intrinsically controls self-renewal of Drosophila germline stem cells.</title>
        <authorList>
            <person name="Park J.K."/>
            <person name="Liu X."/>
            <person name="Strauss T.J."/>
            <person name="McKearin D.M."/>
            <person name="Liu Q."/>
        </authorList>
    </citation>
    <scope>FUNCTION (ISOFORMS PA AND PB)</scope>
    <scope>TISSUE SPECIFICITY (ISOFORM PB)</scope>
    <scope>DISRUPTION PHENOTYPE</scope>
</reference>
<reference evidence="27" key="10">
    <citation type="journal article" date="2007" name="J. Biol. Chem.">
        <title>Functional anatomy of the Drosophila microRNA-generating enzyme.</title>
        <authorList>
            <person name="Ye X."/>
            <person name="Paroo Z."/>
            <person name="Liu Q."/>
        </authorList>
    </citation>
    <scope>FUNCTION (ISOFORM PB)</scope>
    <scope>INTERACTION WITH DCR-1 (ISOFORMS PA AND PB)</scope>
    <scope>MUTAGENESIS OF 308-ALA-ALA-309 AND 440-SER--LYS-465</scope>
</reference>
<reference evidence="27" key="11">
    <citation type="journal article" date="2007" name="RNA">
        <title>Dicer-1, but not Loquacious, is critical for assembly of miRNA-induced silencing complexes.</title>
        <authorList>
            <person name="Liu X."/>
            <person name="Park J.K."/>
            <person name="Jiang F."/>
            <person name="Liu Y."/>
            <person name="McKearin D."/>
            <person name="Liu Q."/>
        </authorList>
    </citation>
    <scope>FUNCTION (ISOFORMS PA AND PB)</scope>
</reference>
<reference evidence="27" key="12">
    <citation type="journal article" date="2009" name="RNA">
        <title>Characterization of the miRNA-RISC loading complex and miRNA-RISC formed in the Drosophila miRNA pathway.</title>
        <authorList>
            <person name="Miyoshi K."/>
            <person name="Okada T.N."/>
            <person name="Siomi H."/>
            <person name="Siomi M.C."/>
        </authorList>
    </citation>
    <scope>IDENTIFICATION IN THE MIRNA-RISC LOADING COMPLEX (ISOFORM PB)</scope>
</reference>
<reference evidence="27" key="13">
    <citation type="journal article" date="2009" name="RNA">
        <title>Processing of Drosophila endo-siRNAs depends on a specific Loquacious isoform.</title>
        <authorList>
            <person name="Zhou R."/>
            <person name="Czech B."/>
            <person name="Brennecke J."/>
            <person name="Sachidanandam R."/>
            <person name="Wohlschlegel J.A."/>
            <person name="Perrimon N."/>
            <person name="Hannon G.J."/>
        </authorList>
    </citation>
    <scope>FUNCTION (ISOFORMS PA; PB AND PD)</scope>
    <scope>INTERACTION WITH DCR-1 AND DCR-2 (ISOFORMS PA; PB; PC AND PD)</scope>
</reference>
<reference evidence="27" key="14">
    <citation type="journal article" date="2011" name="Nucleic Acids Res.">
        <title>Loqs-PD and R2D2 define independent pathways for RISC generation in Drosophila.</title>
        <authorList>
            <person name="Hartig J.V."/>
            <person name="Foerstemann K."/>
        </authorList>
    </citation>
    <scope>FUNCTION (ISOFORM PD)</scope>
    <scope>INTERACTION WITH DCR-2 (ISOFORM PD)</scope>
    <scope>MUTAGENESIS OF 338-VAL--ILE-359 (ISOFORM PD)</scope>
</reference>
<reference evidence="27" key="15">
    <citation type="journal article" date="2012" name="Cell">
        <title>Dicer partner proteins tune the length of mature miRNAs in flies and mammals.</title>
        <authorList>
            <person name="Fukunaga R."/>
            <person name="Han B.W."/>
            <person name="Hung J.H."/>
            <person name="Xu J."/>
            <person name="Weng Z."/>
            <person name="Zamore P.D."/>
        </authorList>
    </citation>
    <scope>FUNCTION (ISOFORMS PA; PB AND PD)</scope>
    <scope>DISRUPTION PHENOTYPE (ISOFORMS PA; PB AND PC)</scope>
</reference>
<reference evidence="27" key="16">
    <citation type="journal article" date="2015" name="Mol. Cell">
        <title>Drosophila dicer-2 cleavage is mediated by helicase- and dsRNA termini-dependent states that are modulated by Loquacious-PD.</title>
        <authorList>
            <person name="Sinha N.K."/>
            <person name="Trettin K.D."/>
            <person name="Aruscavage P.J."/>
            <person name="Bass B.L."/>
        </authorList>
    </citation>
    <scope>FUNCTION (ISOFORM PD)</scope>
</reference>
<reference evidence="27" key="17">
    <citation type="journal article" date="2016" name="Cell Rep.">
        <title>The Drosophila Dicer-1 Partner Loquacious Enhances miRNA Processing from Hairpins with Unstable Structures at the Dicing Site.</title>
        <authorList>
            <person name="Lim M.Y."/>
            <person name="Ng A.W."/>
            <person name="Chou Y."/>
            <person name="Lim T.P."/>
            <person name="Simcox A."/>
            <person name="Tucker-Kellogg G."/>
            <person name="Okamura K."/>
        </authorList>
    </citation>
    <scope>FUNCTION (ISOFORMS PA; PB AND PD)</scope>
</reference>
<reference evidence="27" key="18">
    <citation type="journal article" date="2017" name="Proc. Natl. Acad. Sci. U.S.A.">
        <title>Loquacious-PD facilitates Drosophila Dicer-2 cleavage through interactions with the helicase domain and dsRNA.</title>
        <authorList>
            <person name="Trettin K.D."/>
            <person name="Sinha N.K."/>
            <person name="Eckert D.M."/>
            <person name="Apple S.E."/>
            <person name="Bass B.L."/>
        </authorList>
    </citation>
    <scope>FUNCTION (ISOFORM PD)</scope>
    <scope>INTERACTION WITH DCR-2 (ISOFORM PD)</scope>
    <scope>DOMAIN</scope>
    <scope>MUTAGENESIS OF 338-VAL--ILE-359 (ISOFORM PD)</scope>
</reference>
<reference evidence="27" key="19">
    <citation type="journal article" date="2018" name="Biochem. Biophys. Res. Commun.">
        <title>Loquacious-PD removes phosphate inhibition of Dicer-2 processing of hairpin RNAs into siRNAs.</title>
        <authorList>
            <person name="Fukunaga R."/>
        </authorList>
    </citation>
    <scope>FUNCTION (ISOFORM PD)</scope>
</reference>
<reference evidence="27" key="20">
    <citation type="journal article" date="2018" name="Nucleic Acids Res.">
        <title>Dicer partner protein tunes the length of miRNAs using base-mismatch in the pre-miRNA stem.</title>
        <authorList>
            <person name="Zhu L."/>
            <person name="Kandasamy S.K."/>
            <person name="Fukunaga R."/>
        </authorList>
    </citation>
    <scope>FUNCTION (ISOFORMS PA AND PB)</scope>
</reference>
<reference evidence="27" key="21">
    <citation type="journal article" date="2021" name="Chem. Commun. (Camb.)">
        <title>Loquacious-PD regulates the terminus-dependent molecular recognition of Dicer-2 toward double-stranded RNA.</title>
        <authorList>
            <person name="Jonely M."/>
            <person name="Singh R.K."/>
            <person name="Donelick H.M."/>
            <person name="Bass B.L."/>
            <person name="Noriega R."/>
        </authorList>
    </citation>
    <scope>FUNCTION (ISOFORM PD)</scope>
    <scope>DOMAIN</scope>
</reference>
<reference evidence="27" key="22">
    <citation type="journal article" date="2022" name="Commun. Biol.">
        <title>Low dose rate gamma-irradiation protects fruit fly chromosomes from double strand breaks and telomere fusions by reducing the esi-RNA biogenesis factor Loquacious.</title>
        <authorList>
            <person name="Porrazzo A."/>
            <person name="Cipressa F."/>
            <person name="De Gregorio A."/>
            <person name="De Pitta C."/>
            <person name="Sales G."/>
            <person name="Ciapponi L."/>
            <person name="Morciano P."/>
            <person name="Esposito G."/>
            <person name="Tabocchini M.A."/>
            <person name="Cenci G."/>
        </authorList>
    </citation>
    <scope>FUNCTION (ISOFORM PD)</scope>
    <scope>INDUCTION (ISOFORM PD)</scope>
</reference>
<reference evidence="27" key="23">
    <citation type="journal article" date="2022" name="Commun. Biol.">
        <authorList>
            <person name="Porrazzo A."/>
            <person name="Cipressa F."/>
            <person name="De Gregorio A."/>
            <person name="De Pitta C."/>
            <person name="Sales G."/>
            <person name="Ciapponi L."/>
            <person name="Morciano P."/>
            <person name="Esposito G."/>
            <person name="Tabocchini M.A."/>
            <person name="Cenci G."/>
        </authorList>
    </citation>
    <scope>ERRATUM OF PUBMED:36057690</scope>
</reference>
<reference evidence="35" key="24">
    <citation type="journal article" date="2016" name="RNA">
        <title>Structural and functional insights into the fly microRNA biogenesis factor Loquacious.</title>
        <authorList>
            <person name="Jakob L."/>
            <person name="Treiber T."/>
            <person name="Treiber N."/>
            <person name="Gust A."/>
            <person name="Kramm K."/>
            <person name="Hansen K."/>
            <person name="Stotz M."/>
            <person name="Wankerl L."/>
            <person name="Herzog F."/>
            <person name="Hannus S."/>
            <person name="Grohmann D."/>
            <person name="Meister G."/>
        </authorList>
    </citation>
    <scope>X-RAY CRYSTALLOGRAPHY (2.65 ANGSTROMS) OF 392-463</scope>
    <scope>FUNCTION (ISOFORMS PA AND PB)</scope>
    <scope>SUBUNIT</scope>
    <scope>INTERACTION WITH DCR-1 (ISOFORM PB)</scope>
    <scope>MUTAGENESIS OF 379-LEU--LEU-382; PHE-419 AND LEU-426</scope>
</reference>
<reference evidence="36" key="25">
    <citation type="journal article" date="2017" name="Nucleic Acids Res.">
        <title>Molecular basis for asymmetry sensing of siRNAs by the Drosophila Loqs-PD/Dcr-2 complex in RNA interference.</title>
        <authorList>
            <person name="Tants J.-N."/>
            <person name="Fesser S."/>
            <person name="Kern T."/>
            <person name="Stehle R."/>
            <person name="Geerlof A."/>
            <person name="Wunderlich C."/>
            <person name="Juen M."/>
            <person name="Hartlmuller C."/>
            <person name="Boettcher R."/>
            <person name="Kunzelmann S."/>
            <person name="Lange O."/>
            <person name="Kreutz C."/>
            <person name="Foerstemann K."/>
            <person name="Sattler M."/>
        </authorList>
    </citation>
    <scope>STRUCTURE BY NMR OF 252-318</scope>
    <scope>FUNCTION (ISOFORM PD)</scope>
    <scope>DOMAIN</scope>
    <scope>INTERACTION WITH DCR-2 (ISOFORM PD)</scope>
</reference>
<reference evidence="39 40 41 42 43 44" key="26">
    <citation type="journal article" date="2022" name="Mol. Cell">
        <title>Structural basis of microRNA biogenesis by Dicer-1 and its partner protein Loqs-PB.</title>
        <authorList>
            <person name="Jouravleva K."/>
            <person name="Golovenko D."/>
            <person name="Demo G."/>
            <person name="Dutcher R.C."/>
            <person name="Hall T.M.T."/>
            <person name="Zamore P.D."/>
            <person name="Korostelev A.A."/>
        </authorList>
    </citation>
    <scope>STRUCTURE BY ELECTRON MICROSCOPY (3.06 ANGSTROMS) IN COMPLEX WITH DCR-1</scope>
    <scope>FUNCTION (ISOFORM PB)</scope>
    <scope>DOMAIN</scope>
</reference>
<reference evidence="37 38" key="27">
    <citation type="journal article" date="2022" name="Nature">
        <title>Structural insights into dsRNA processing by Drosophila Dicer-2-Loqs-PD.</title>
        <authorList>
            <person name="Su S."/>
            <person name="Wang J."/>
            <person name="Deng T."/>
            <person name="Yuan X."/>
            <person name="He J."/>
            <person name="Liu N."/>
            <person name="Li X."/>
            <person name="Huang Y."/>
            <person name="Wang H.W."/>
            <person name="Ma J."/>
        </authorList>
    </citation>
    <scope>STRUCTURE BY ELECTRON MICROSCOPY (3.12 ANGSTROMS) (ISOFORM PD) IN COMPLEX WITH DCR-2</scope>
    <scope>MUTAGENESIS OF TYR-347; PHE-356 AND ILE-359 (ISOFORM PD)</scope>
</reference>
<accession>Q9VJY9</accession>
<accession>M9MRT5</accession>
<accession>Q4TZM6</accession>
<accession>Q8IP72</accession>
<accession>Q8SZ74</accession>